<gene>
    <name evidence="2" type="primary">psaC</name>
    <name type="ordered locus">gsl3287</name>
</gene>
<feature type="initiator methionine" description="Removed" evidence="1">
    <location>
        <position position="1"/>
    </location>
</feature>
<feature type="chain" id="PRO_0000062011" description="Photosystem I iron-sulfur center">
    <location>
        <begin position="2"/>
        <end position="81"/>
    </location>
</feature>
<feature type="domain" description="4Fe-4S ferredoxin-type 1" evidence="2">
    <location>
        <begin position="2"/>
        <end position="31"/>
    </location>
</feature>
<feature type="domain" description="4Fe-4S ferredoxin-type 2" evidence="2">
    <location>
        <begin position="39"/>
        <end position="68"/>
    </location>
</feature>
<feature type="binding site" evidence="2">
    <location>
        <position position="11"/>
    </location>
    <ligand>
        <name>[4Fe-4S] cluster</name>
        <dbReference type="ChEBI" id="CHEBI:49883"/>
        <label>1</label>
    </ligand>
</feature>
<feature type="binding site" evidence="2">
    <location>
        <position position="14"/>
    </location>
    <ligand>
        <name>[4Fe-4S] cluster</name>
        <dbReference type="ChEBI" id="CHEBI:49883"/>
        <label>1</label>
    </ligand>
</feature>
<feature type="binding site" evidence="2">
    <location>
        <position position="17"/>
    </location>
    <ligand>
        <name>[4Fe-4S] cluster</name>
        <dbReference type="ChEBI" id="CHEBI:49883"/>
        <label>1</label>
    </ligand>
</feature>
<feature type="binding site" evidence="2">
    <location>
        <position position="21"/>
    </location>
    <ligand>
        <name>[4Fe-4S] cluster</name>
        <dbReference type="ChEBI" id="CHEBI:49883"/>
        <label>2</label>
    </ligand>
</feature>
<feature type="binding site" evidence="2">
    <location>
        <position position="48"/>
    </location>
    <ligand>
        <name>[4Fe-4S] cluster</name>
        <dbReference type="ChEBI" id="CHEBI:49883"/>
        <label>2</label>
    </ligand>
</feature>
<feature type="binding site" evidence="2">
    <location>
        <position position="51"/>
    </location>
    <ligand>
        <name>[4Fe-4S] cluster</name>
        <dbReference type="ChEBI" id="CHEBI:49883"/>
        <label>2</label>
    </ligand>
</feature>
<feature type="binding site" evidence="2">
    <location>
        <position position="54"/>
    </location>
    <ligand>
        <name>[4Fe-4S] cluster</name>
        <dbReference type="ChEBI" id="CHEBI:49883"/>
        <label>2</label>
    </ligand>
</feature>
<feature type="binding site" evidence="2">
    <location>
        <position position="58"/>
    </location>
    <ligand>
        <name>[4Fe-4S] cluster</name>
        <dbReference type="ChEBI" id="CHEBI:49883"/>
        <label>1</label>
    </ligand>
</feature>
<comment type="function">
    <text>Apoprotein for the two 4Fe-4S centers FA and FB of photosystem I (PSI); essential for photochemical activity. FB is the terminal electron acceptor of PSI, donating electrons to ferredoxin. The C-terminus interacts with PsaA/B/D and helps assemble the protein into the PSI complex. Required for binding of PsaD and PsaE to PSI. PSI is a plastocyanin/cytochrome c6-ferredoxin oxidoreductase, converting photonic excitation into a charge separation, which transfers an electron from the donor P700 chlorophyll pair to the spectroscopically characterized acceptors A0, A1, FX, FA and FB in turn.</text>
</comment>
<comment type="catalytic activity">
    <reaction evidence="2">
        <text>reduced [plastocyanin] + hnu + oxidized [2Fe-2S]-[ferredoxin] = oxidized [plastocyanin] + reduced [2Fe-2S]-[ferredoxin]</text>
        <dbReference type="Rhea" id="RHEA:30407"/>
        <dbReference type="Rhea" id="RHEA-COMP:10000"/>
        <dbReference type="Rhea" id="RHEA-COMP:10001"/>
        <dbReference type="Rhea" id="RHEA-COMP:10039"/>
        <dbReference type="Rhea" id="RHEA-COMP:10040"/>
        <dbReference type="ChEBI" id="CHEBI:29036"/>
        <dbReference type="ChEBI" id="CHEBI:30212"/>
        <dbReference type="ChEBI" id="CHEBI:33737"/>
        <dbReference type="ChEBI" id="CHEBI:33738"/>
        <dbReference type="ChEBI" id="CHEBI:49552"/>
        <dbReference type="EC" id="1.97.1.12"/>
    </reaction>
</comment>
<comment type="cofactor">
    <cofactor evidence="2">
        <name>[4Fe-4S] cluster</name>
        <dbReference type="ChEBI" id="CHEBI:49883"/>
    </cofactor>
    <text evidence="2">Binds 2 [4Fe-4S] clusters. Cluster 2 is most probably the spectroscopically characterized electron acceptor FA and cluster 1 is most probably FB.</text>
</comment>
<comment type="subunit">
    <text>The G.violaceus PSI reaction center is composed of one copy each of PsaA,B,C,D,E,F,L,M and Z, and forms trimeric complexes.</text>
</comment>
<comment type="subcellular location">
    <subcellularLocation>
        <location>Cell inner membrane</location>
        <topology>Peripheral membrane protein</topology>
        <orientation>Cytoplasmic side</orientation>
    </subcellularLocation>
</comment>
<accession>Q7NG86</accession>
<reference key="1">
    <citation type="journal article" date="2003" name="DNA Res.">
        <title>Complete genome structure of Gloeobacter violaceus PCC 7421, a cyanobacterium that lacks thylakoids.</title>
        <authorList>
            <person name="Nakamura Y."/>
            <person name="Kaneko T."/>
            <person name="Sato S."/>
            <person name="Mimuro M."/>
            <person name="Miyashita H."/>
            <person name="Tsuchiya T."/>
            <person name="Sasamoto S."/>
            <person name="Watanabe A."/>
            <person name="Kawashima K."/>
            <person name="Kishida Y."/>
            <person name="Kiyokawa C."/>
            <person name="Kohara M."/>
            <person name="Matsumoto M."/>
            <person name="Matsuno A."/>
            <person name="Nakazaki N."/>
            <person name="Shimpo S."/>
            <person name="Takeuchi C."/>
            <person name="Yamada M."/>
            <person name="Tabata S."/>
        </authorList>
    </citation>
    <scope>NUCLEOTIDE SEQUENCE [LARGE SCALE GENOMIC DNA]</scope>
    <source>
        <strain>ATCC 29082 / PCC 7421</strain>
    </source>
</reference>
<reference key="2">
    <citation type="journal article" date="2004" name="FEBS Lett.">
        <title>Unique constitution of photosystem I with a novel subunit in the cyanobacterium Gloeobacter violaceus PCC 7421.</title>
        <authorList>
            <person name="Inoue H."/>
            <person name="Tsuchiya T."/>
            <person name="Satoh S."/>
            <person name="Miyashita H."/>
            <person name="Kaneko T."/>
            <person name="Tabata S."/>
            <person name="Tanaka A."/>
            <person name="Mimuro M."/>
        </authorList>
    </citation>
    <scope>IDENTIFICATION BY MASS SPECTROMETRY</scope>
    <scope>CHARACTERIZATION OF PHOTOSYSTEM I</scope>
    <source>
        <strain>ATCC 29082 / PCC 7421</strain>
    </source>
</reference>
<keyword id="KW-0002">3D-structure</keyword>
<keyword id="KW-0004">4Fe-4S</keyword>
<keyword id="KW-0997">Cell inner membrane</keyword>
<keyword id="KW-1003">Cell membrane</keyword>
<keyword id="KW-0249">Electron transport</keyword>
<keyword id="KW-0408">Iron</keyword>
<keyword id="KW-0411">Iron-sulfur</keyword>
<keyword id="KW-0472">Membrane</keyword>
<keyword id="KW-0479">Metal-binding</keyword>
<keyword id="KW-0560">Oxidoreductase</keyword>
<keyword id="KW-0602">Photosynthesis</keyword>
<keyword id="KW-0603">Photosystem I</keyword>
<keyword id="KW-1185">Reference proteome</keyword>
<keyword id="KW-0677">Repeat</keyword>
<keyword id="KW-0813">Transport</keyword>
<evidence type="ECO:0000250" key="1"/>
<evidence type="ECO:0000255" key="2">
    <source>
        <dbReference type="HAMAP-Rule" id="MF_01303"/>
    </source>
</evidence>
<dbReference type="EC" id="1.97.1.12" evidence="2"/>
<dbReference type="EMBL" id="BA000045">
    <property type="protein sequence ID" value="BAC91228.1"/>
    <property type="molecule type" value="Genomic_DNA"/>
</dbReference>
<dbReference type="RefSeq" id="NP_926233.1">
    <property type="nucleotide sequence ID" value="NC_005125.1"/>
</dbReference>
<dbReference type="RefSeq" id="WP_011143277.1">
    <property type="nucleotide sequence ID" value="NC_005125.1"/>
</dbReference>
<dbReference type="PDB" id="7F4V">
    <property type="method" value="EM"/>
    <property type="resolution" value="2.04 A"/>
    <property type="chains" value="aC/bC/cC=1-81"/>
</dbReference>
<dbReference type="PDBsum" id="7F4V"/>
<dbReference type="EMDB" id="EMD-31455"/>
<dbReference type="SMR" id="Q7NG86"/>
<dbReference type="STRING" id="251221.gene:10760797"/>
<dbReference type="EnsemblBacteria" id="BAC91228">
    <property type="protein sequence ID" value="BAC91228"/>
    <property type="gene ID" value="BAC91228"/>
</dbReference>
<dbReference type="KEGG" id="gvi:gsl3287"/>
<dbReference type="PATRIC" id="fig|251221.4.peg.3319"/>
<dbReference type="eggNOG" id="COG1143">
    <property type="taxonomic scope" value="Bacteria"/>
</dbReference>
<dbReference type="HOGENOM" id="CLU_139698_8_0_3"/>
<dbReference type="InParanoid" id="Q7NG86"/>
<dbReference type="OrthoDB" id="9804603at2"/>
<dbReference type="PhylomeDB" id="Q7NG86"/>
<dbReference type="Proteomes" id="UP000000557">
    <property type="component" value="Chromosome"/>
</dbReference>
<dbReference type="GO" id="GO:0009522">
    <property type="term" value="C:photosystem I"/>
    <property type="evidence" value="ECO:0007669"/>
    <property type="project" value="UniProtKB-KW"/>
</dbReference>
<dbReference type="GO" id="GO:0005886">
    <property type="term" value="C:plasma membrane"/>
    <property type="evidence" value="ECO:0007669"/>
    <property type="project" value="UniProtKB-SubCell"/>
</dbReference>
<dbReference type="GO" id="GO:0042651">
    <property type="term" value="C:thylakoid membrane"/>
    <property type="evidence" value="ECO:0007669"/>
    <property type="project" value="InterPro"/>
</dbReference>
<dbReference type="GO" id="GO:0051539">
    <property type="term" value="F:4 iron, 4 sulfur cluster binding"/>
    <property type="evidence" value="ECO:0007669"/>
    <property type="project" value="UniProtKB-KW"/>
</dbReference>
<dbReference type="GO" id="GO:0009055">
    <property type="term" value="F:electron transfer activity"/>
    <property type="evidence" value="ECO:0007669"/>
    <property type="project" value="UniProtKB-UniRule"/>
</dbReference>
<dbReference type="GO" id="GO:0046872">
    <property type="term" value="F:metal ion binding"/>
    <property type="evidence" value="ECO:0007669"/>
    <property type="project" value="UniProtKB-KW"/>
</dbReference>
<dbReference type="GO" id="GO:0016491">
    <property type="term" value="F:oxidoreductase activity"/>
    <property type="evidence" value="ECO:0007669"/>
    <property type="project" value="UniProtKB-KW"/>
</dbReference>
<dbReference type="GO" id="GO:0009773">
    <property type="term" value="P:photosynthetic electron transport in photosystem I"/>
    <property type="evidence" value="ECO:0007669"/>
    <property type="project" value="InterPro"/>
</dbReference>
<dbReference type="FunFam" id="3.30.70.20:FF:000001">
    <property type="entry name" value="Photosystem I iron-sulfur center"/>
    <property type="match status" value="1"/>
</dbReference>
<dbReference type="Gene3D" id="3.30.70.20">
    <property type="match status" value="1"/>
</dbReference>
<dbReference type="HAMAP" id="MF_01303">
    <property type="entry name" value="PSI_PsaC"/>
    <property type="match status" value="1"/>
</dbReference>
<dbReference type="InterPro" id="IPR017896">
    <property type="entry name" value="4Fe4S_Fe-S-bd"/>
</dbReference>
<dbReference type="InterPro" id="IPR017900">
    <property type="entry name" value="4Fe4S_Fe_S_CS"/>
</dbReference>
<dbReference type="InterPro" id="IPR050157">
    <property type="entry name" value="PSI_iron-sulfur_center"/>
</dbReference>
<dbReference type="InterPro" id="IPR017491">
    <property type="entry name" value="PSI_PsaC"/>
</dbReference>
<dbReference type="NCBIfam" id="TIGR03048">
    <property type="entry name" value="PS_I_psaC"/>
    <property type="match status" value="1"/>
</dbReference>
<dbReference type="PANTHER" id="PTHR24960:SF79">
    <property type="entry name" value="PHOTOSYSTEM I IRON-SULFUR CENTER"/>
    <property type="match status" value="1"/>
</dbReference>
<dbReference type="PANTHER" id="PTHR24960">
    <property type="entry name" value="PHOTOSYSTEM I IRON-SULFUR CENTER-RELATED"/>
    <property type="match status" value="1"/>
</dbReference>
<dbReference type="Pfam" id="PF12838">
    <property type="entry name" value="Fer4_7"/>
    <property type="match status" value="1"/>
</dbReference>
<dbReference type="SUPFAM" id="SSF54862">
    <property type="entry name" value="4Fe-4S ferredoxins"/>
    <property type="match status" value="1"/>
</dbReference>
<dbReference type="PROSITE" id="PS00198">
    <property type="entry name" value="4FE4S_FER_1"/>
    <property type="match status" value="2"/>
</dbReference>
<dbReference type="PROSITE" id="PS51379">
    <property type="entry name" value="4FE4S_FER_2"/>
    <property type="match status" value="2"/>
</dbReference>
<protein>
    <recommendedName>
        <fullName evidence="2">Photosystem I iron-sulfur center</fullName>
        <ecNumber evidence="2">1.97.1.12</ecNumber>
    </recommendedName>
    <alternativeName>
        <fullName evidence="2">9 kDa polypeptide</fullName>
    </alternativeName>
    <alternativeName>
        <fullName evidence="2">PSI-C</fullName>
    </alternativeName>
    <alternativeName>
        <fullName evidence="2">Photosystem I subunit VII</fullName>
    </alternativeName>
    <alternativeName>
        <fullName evidence="2">PsaC</fullName>
    </alternativeName>
</protein>
<proteinExistence type="evidence at protein level"/>
<organism>
    <name type="scientific">Gloeobacter violaceus (strain ATCC 29082 / PCC 7421)</name>
    <dbReference type="NCBI Taxonomy" id="251221"/>
    <lineage>
        <taxon>Bacteria</taxon>
        <taxon>Bacillati</taxon>
        <taxon>Cyanobacteriota</taxon>
        <taxon>Cyanophyceae</taxon>
        <taxon>Gloeobacterales</taxon>
        <taxon>Gloeobacteraceae</taxon>
        <taxon>Gloeobacter</taxon>
    </lineage>
</organism>
<sequence length="81" mass="8798">MSHSVKIYDTCIGCTQCVRACPLDVLEMVPWDGNKAGTIASSPRTEDCVGCKRCETACPTDFLSIRVYLGAETTRSMGLAY</sequence>
<name>PSAC_GLOVI</name>